<organism>
    <name type="scientific">Gibberella moniliformis (strain M3125 / FGSC 7600)</name>
    <name type="common">Maize ear and stalk rot fungus</name>
    <name type="synonym">Fusarium verticillioides</name>
    <dbReference type="NCBI Taxonomy" id="334819"/>
    <lineage>
        <taxon>Eukaryota</taxon>
        <taxon>Fungi</taxon>
        <taxon>Dikarya</taxon>
        <taxon>Ascomycota</taxon>
        <taxon>Pezizomycotina</taxon>
        <taxon>Sordariomycetes</taxon>
        <taxon>Hypocreomycetidae</taxon>
        <taxon>Hypocreales</taxon>
        <taxon>Nectriaceae</taxon>
        <taxon>Fusarium</taxon>
        <taxon>Fusarium fujikuroi species complex</taxon>
    </lineage>
</organism>
<accession>W7N466</accession>
<accession>B6S1X9</accession>
<accession>W7MTI9</accession>
<accession>W7N2Q0</accession>
<proteinExistence type="evidence at transcript level"/>
<reference key="1">
    <citation type="journal article" date="2009" name="J. Appl. Microbiol.">
        <title>FDB2 encodes a member of the arylamine N-acetyltransferase family and is necessary for biotransformation of benzoxazolinones by Fusarium verticillioides.</title>
        <authorList>
            <person name="Glenn A.E."/>
            <person name="Bacon C.W."/>
        </authorList>
    </citation>
    <scope>NUCLEOTIDE SEQUENCE [GENOMIC DNA]</scope>
    <scope>FUNCTION</scope>
    <scope>DISRUPTION PHENOTYPE</scope>
</reference>
<reference key="2">
    <citation type="journal article" date="2010" name="Nature">
        <title>Comparative genomics reveals mobile pathogenicity chromosomes in Fusarium.</title>
        <authorList>
            <person name="Ma L.-J."/>
            <person name="van der Does H.C."/>
            <person name="Borkovich K.A."/>
            <person name="Coleman J.J."/>
            <person name="Daboussi M.-J."/>
            <person name="Di Pietro A."/>
            <person name="Dufresne M."/>
            <person name="Freitag M."/>
            <person name="Grabherr M."/>
            <person name="Henrissat B."/>
            <person name="Houterman P.M."/>
            <person name="Kang S."/>
            <person name="Shim W.-B."/>
            <person name="Woloshuk C."/>
            <person name="Xie X."/>
            <person name="Xu J.-R."/>
            <person name="Antoniw J."/>
            <person name="Baker S.E."/>
            <person name="Bluhm B.H."/>
            <person name="Breakspear A."/>
            <person name="Brown D.W."/>
            <person name="Butchko R.A.E."/>
            <person name="Chapman S."/>
            <person name="Coulson R."/>
            <person name="Coutinho P.M."/>
            <person name="Danchin E.G.J."/>
            <person name="Diener A."/>
            <person name="Gale L.R."/>
            <person name="Gardiner D.M."/>
            <person name="Goff S."/>
            <person name="Hammond-Kosack K.E."/>
            <person name="Hilburn K."/>
            <person name="Hua-Van A."/>
            <person name="Jonkers W."/>
            <person name="Kazan K."/>
            <person name="Kodira C.D."/>
            <person name="Koehrsen M."/>
            <person name="Kumar L."/>
            <person name="Lee Y.-H."/>
            <person name="Li L."/>
            <person name="Manners J.M."/>
            <person name="Miranda-Saavedra D."/>
            <person name="Mukherjee M."/>
            <person name="Park G."/>
            <person name="Park J."/>
            <person name="Park S.-Y."/>
            <person name="Proctor R.H."/>
            <person name="Regev A."/>
            <person name="Ruiz-Roldan M.C."/>
            <person name="Sain D."/>
            <person name="Sakthikumar S."/>
            <person name="Sykes S."/>
            <person name="Schwartz D.C."/>
            <person name="Turgeon B.G."/>
            <person name="Wapinski I."/>
            <person name="Yoder O."/>
            <person name="Young S."/>
            <person name="Zeng Q."/>
            <person name="Zhou S."/>
            <person name="Galagan J."/>
            <person name="Cuomo C.A."/>
            <person name="Kistler H.C."/>
            <person name="Rep M."/>
        </authorList>
    </citation>
    <scope>NUCLEOTIDE SEQUENCE [LARGE SCALE GENOMIC DNA]</scope>
    <source>
        <strain>M3125 / FGSC 7600</strain>
    </source>
</reference>
<reference key="3">
    <citation type="journal article" date="2002" name="Mol. Plant Microbe Interact.">
        <title>Fdb1 and Fdb2, Fusarium verticillioides loci necessary for detoxification of preformed antimicrobials from corn.</title>
        <authorList>
            <person name="Glenn A.E."/>
            <person name="Gold S.E."/>
            <person name="Bacon C.W."/>
        </authorList>
    </citation>
    <scope>FUNCTION</scope>
</reference>
<reference key="4">
    <citation type="journal article" date="2016" name="PLoS ONE">
        <title>Two horizontally transferred xenobiotic resistance gene clusters associated with detoxification of benzoxazolinones by Fusarium species.</title>
        <authorList>
            <person name="Glenn A.E."/>
            <person name="Davis C.B."/>
            <person name="Gao M."/>
            <person name="Gold S.E."/>
            <person name="Mitchell T.R."/>
            <person name="Proctor R.H."/>
            <person name="Stewart J.E."/>
            <person name="Snook M.E."/>
        </authorList>
    </citation>
    <scope>FUNCTION</scope>
</reference>
<evidence type="ECO:0000255" key="1">
    <source>
        <dbReference type="PROSITE-ProRule" id="PRU00227"/>
    </source>
</evidence>
<evidence type="ECO:0000256" key="2">
    <source>
        <dbReference type="SAM" id="MobiDB-lite"/>
    </source>
</evidence>
<evidence type="ECO:0000269" key="3">
    <source>
    </source>
</evidence>
<evidence type="ECO:0000269" key="4">
    <source>
    </source>
</evidence>
<evidence type="ECO:0000269" key="5">
    <source>
    </source>
</evidence>
<evidence type="ECO:0000303" key="6">
    <source>
    </source>
</evidence>
<evidence type="ECO:0000305" key="7"/>
<evidence type="ECO:0000305" key="8">
    <source>
    </source>
</evidence>
<name>FDB3_GIBM7</name>
<keyword id="KW-0238">DNA-binding</keyword>
<keyword id="KW-0479">Metal-binding</keyword>
<keyword id="KW-0539">Nucleus</keyword>
<keyword id="KW-1185">Reference proteome</keyword>
<keyword id="KW-0804">Transcription</keyword>
<keyword id="KW-0805">Transcription regulation</keyword>
<keyword id="KW-0862">Zinc</keyword>
<gene>
    <name evidence="6" type="primary">FDB3</name>
    <name type="ORF">FVEG_12635</name>
</gene>
<comment type="function">
    <text evidence="3 4 5">Transcription factor; part of the Fusarium detoxification of benzoxazolinone cluster 2 (FDB2) involved in the degradation of benzoxazolinones produced by the host plant (PubMed:19302487, PubMed:26808652). Maize, wheat, and rye produce the 2 benzoxazinone phytoanticipins 2,4-dihy-droxy-7-methoxy-1,4-benzoxazin-3-one (DIMBOA) and 2,4-dihydroxy-1,4-benzoxazin-3-one (DIBOA) that, due to their inherent instability once released, spontaneously degrade to the more stable corresponding benzoxazolinones, 6-methoxy-2-benzoxazolinone (MBOA) and 2-benzoxazolinone (BOA), respectively (PubMed:11876429). FDB3 is not essentiel, but contributes to efficient BOA biotransformation (PubMed:19302487).</text>
</comment>
<comment type="subcellular location">
    <subcellularLocation>
        <location evidence="1">Nucleus</location>
    </subcellularLocation>
</comment>
<comment type="induction">
    <text evidence="5">Expression is induced in response to 2-benzoxasolinone (BOA) exposure.</text>
</comment>
<comment type="disruption phenotype">
    <text evidence="4">Decreases, but does not eliminate the ability to metabolize 2-benzoxasolinone (BOA).</text>
</comment>
<comment type="miscellaneous">
    <text evidence="8">Fusarium verticillioides possesses 2 unlinked loci, FDB1 and FDB2, necessary for detoxification of antimicrobial compounds produced by maize, including 2-benzoxazolinone (BOA) (Probable). The FDB2 cluster arose as a duplication of the FDB1 cluster with rearrangement and expansion by incorporating additional genes (Probable).</text>
</comment>
<comment type="sequence caution" evidence="7">
    <conflict type="erroneous gene model prediction">
        <sequence resource="EMBL-CDS" id="ACE00535"/>
    </conflict>
</comment>
<comment type="sequence caution" evidence="7">
    <conflict type="erroneous gene model prediction">
        <sequence resource="EMBL-CDS" id="EWG54415"/>
    </conflict>
</comment>
<comment type="sequence caution" evidence="7">
    <conflict type="erroneous gene model prediction">
        <sequence resource="EMBL-CDS" id="EWG54416"/>
    </conflict>
</comment>
<sequence length="748" mass="82410">MPEQPRRPSDQEQNQSETGPPTNKRRRIGLACNACRSRKSRCDGQRPSCSSCLSLGFDCMYEPGDSATNVIVRKDYVTDLEQRVSSVEHNLQRLNDVLKGHLSPCTNANTSPCHHGTINAGPSMPSPAPTAPTKASAPSGARTGTCATSLEEPQDEEGIPNGMAMTFVEEKTSAFYGEASNINFTQLLLRAIAVAHDSPGAPSGLDRASVLGESVVASVSQSKSSLGGTATPFDSLPTALPSVEEMDTLLDLYFDTAGVVFPFIHEETMRKTYNECRLNGFTRARRTWLGTLNMVFAMASNFDRDYTTSSKKRFERSNIFYKRAMGLCNELSKRVISLEIVHYLILVVLHCQGTSRSVQAWNNYGLVIRSAMALGLHAESTERALNPVQKEYRRRTWVVIYCLDKVLSTAVGRPASIPDEQMMRREPSSGRSPATSGNAADLPGDFLAVSFRMYQVMSKSLVIQYGANLDHDSELDEMAHLKASGELRKQLRLWAANLPPHLQLCDVESDVLLQNTKANRLRVILTMRYHNLSILIHKPLLSATILHLFRQGDAANDASSYLIQLAMAEAHECIRSAQLTIDIVHSVITVDATSKNNLGVWYFTLYYVFTASLVICGRLLWAQHGDTVVDEASASHMRFLLGKAETIFLNLDHENSLVLSCLEYVRRLSRMCGIRETGPDAASASIHDNGSNSTGSADAMSFDLDNMDPFQLFASEMFDPAIFDHFNQSPVDGMSFVNGLWDGFPCGG</sequence>
<dbReference type="EMBL" id="EU567121">
    <property type="protein sequence ID" value="ACE00535.1"/>
    <property type="status" value="ALT_SEQ"/>
    <property type="molecule type" value="Genomic_DNA"/>
</dbReference>
<dbReference type="EMBL" id="CM000580">
    <property type="protein sequence ID" value="EWG54414.1"/>
    <property type="molecule type" value="Genomic_DNA"/>
</dbReference>
<dbReference type="EMBL" id="CM000580">
    <property type="protein sequence ID" value="EWG54415.1"/>
    <property type="status" value="ALT_SEQ"/>
    <property type="molecule type" value="Genomic_DNA"/>
</dbReference>
<dbReference type="EMBL" id="CM000580">
    <property type="protein sequence ID" value="EWG54416.1"/>
    <property type="status" value="ALT_SEQ"/>
    <property type="molecule type" value="Genomic_DNA"/>
</dbReference>
<dbReference type="RefSeq" id="XP_018760605.1">
    <property type="nucleotide sequence ID" value="XM_018901983.1"/>
</dbReference>
<dbReference type="RefSeq" id="XP_018760606.1">
    <property type="nucleotide sequence ID" value="XM_018901984.1"/>
</dbReference>
<dbReference type="RefSeq" id="XP_018760607.1">
    <property type="nucleotide sequence ID" value="XM_018901985.1"/>
</dbReference>
<dbReference type="GeneID" id="30070063"/>
<dbReference type="KEGG" id="fvr:FVEG_12635"/>
<dbReference type="VEuPathDB" id="FungiDB:FVEG_12635"/>
<dbReference type="eggNOG" id="ENOG502RD0D">
    <property type="taxonomic scope" value="Eukaryota"/>
</dbReference>
<dbReference type="OrthoDB" id="80705at110618"/>
<dbReference type="Proteomes" id="UP000009096">
    <property type="component" value="Chromosome 3"/>
</dbReference>
<dbReference type="GO" id="GO:0005634">
    <property type="term" value="C:nucleus"/>
    <property type="evidence" value="ECO:0007669"/>
    <property type="project" value="UniProtKB-SubCell"/>
</dbReference>
<dbReference type="GO" id="GO:0000981">
    <property type="term" value="F:DNA-binding transcription factor activity, RNA polymerase II-specific"/>
    <property type="evidence" value="ECO:0007669"/>
    <property type="project" value="InterPro"/>
</dbReference>
<dbReference type="GO" id="GO:0000978">
    <property type="term" value="F:RNA polymerase II cis-regulatory region sequence-specific DNA binding"/>
    <property type="evidence" value="ECO:0007669"/>
    <property type="project" value="TreeGrafter"/>
</dbReference>
<dbReference type="GO" id="GO:0008270">
    <property type="term" value="F:zinc ion binding"/>
    <property type="evidence" value="ECO:0007669"/>
    <property type="project" value="InterPro"/>
</dbReference>
<dbReference type="GO" id="GO:0006351">
    <property type="term" value="P:DNA-templated transcription"/>
    <property type="evidence" value="ECO:0007669"/>
    <property type="project" value="InterPro"/>
</dbReference>
<dbReference type="GO" id="GO:0000435">
    <property type="term" value="P:positive regulation of transcription from RNA polymerase II promoter by galactose"/>
    <property type="evidence" value="ECO:0007669"/>
    <property type="project" value="TreeGrafter"/>
</dbReference>
<dbReference type="CDD" id="cd12148">
    <property type="entry name" value="fungal_TF_MHR"/>
    <property type="match status" value="1"/>
</dbReference>
<dbReference type="CDD" id="cd00067">
    <property type="entry name" value="GAL4"/>
    <property type="match status" value="1"/>
</dbReference>
<dbReference type="Gene3D" id="4.10.240.10">
    <property type="entry name" value="Zn(2)-C6 fungal-type DNA-binding domain"/>
    <property type="match status" value="1"/>
</dbReference>
<dbReference type="InterPro" id="IPR051127">
    <property type="entry name" value="Fungal_SecMet_Regulators"/>
</dbReference>
<dbReference type="InterPro" id="IPR007219">
    <property type="entry name" value="Transcription_factor_dom_fun"/>
</dbReference>
<dbReference type="InterPro" id="IPR036864">
    <property type="entry name" value="Zn2-C6_fun-type_DNA-bd_sf"/>
</dbReference>
<dbReference type="InterPro" id="IPR001138">
    <property type="entry name" value="Zn2Cys6_DnaBD"/>
</dbReference>
<dbReference type="PANTHER" id="PTHR47424">
    <property type="entry name" value="REGULATORY PROTEIN GAL4"/>
    <property type="match status" value="1"/>
</dbReference>
<dbReference type="PANTHER" id="PTHR47424:SF3">
    <property type="entry name" value="REGULATORY PROTEIN GAL4"/>
    <property type="match status" value="1"/>
</dbReference>
<dbReference type="Pfam" id="PF04082">
    <property type="entry name" value="Fungal_trans"/>
    <property type="match status" value="1"/>
</dbReference>
<dbReference type="Pfam" id="PF00172">
    <property type="entry name" value="Zn_clus"/>
    <property type="match status" value="1"/>
</dbReference>
<dbReference type="SMART" id="SM00906">
    <property type="entry name" value="Fungal_trans"/>
    <property type="match status" value="1"/>
</dbReference>
<dbReference type="SMART" id="SM00066">
    <property type="entry name" value="GAL4"/>
    <property type="match status" value="1"/>
</dbReference>
<dbReference type="SUPFAM" id="SSF57701">
    <property type="entry name" value="Zn2/Cys6 DNA-binding domain"/>
    <property type="match status" value="1"/>
</dbReference>
<dbReference type="PROSITE" id="PS00463">
    <property type="entry name" value="ZN2_CY6_FUNGAL_1"/>
    <property type="match status" value="1"/>
</dbReference>
<dbReference type="PROSITE" id="PS50048">
    <property type="entry name" value="ZN2_CY6_FUNGAL_2"/>
    <property type="match status" value="1"/>
</dbReference>
<protein>
    <recommendedName>
        <fullName evidence="6">Transcription factor FBD3</fullName>
    </recommendedName>
    <alternativeName>
        <fullName evidence="6">Fusarium detoxification of benzoxazolinone cluster 2 protein 3</fullName>
        <shortName evidence="6">FDB2 cluster protein 3</shortName>
    </alternativeName>
</protein>
<feature type="chain" id="PRO_0000454603" description="Transcription factor FBD3">
    <location>
        <begin position="1"/>
        <end position="748"/>
    </location>
</feature>
<feature type="DNA-binding region" description="Zn(2)-C6 fungal-type" evidence="1">
    <location>
        <begin position="32"/>
        <end position="59"/>
    </location>
</feature>
<feature type="region of interest" description="Disordered" evidence="2">
    <location>
        <begin position="1"/>
        <end position="26"/>
    </location>
</feature>
<feature type="region of interest" description="Disordered" evidence="2">
    <location>
        <begin position="116"/>
        <end position="160"/>
    </location>
</feature>
<feature type="region of interest" description="Disordered" evidence="2">
    <location>
        <begin position="417"/>
        <end position="438"/>
    </location>
</feature>
<feature type="compositionally biased region" description="Basic and acidic residues" evidence="2">
    <location>
        <begin position="1"/>
        <end position="10"/>
    </location>
</feature>
<feature type="compositionally biased region" description="Polar residues" evidence="2">
    <location>
        <begin position="11"/>
        <end position="21"/>
    </location>
</feature>
<feature type="compositionally biased region" description="Low complexity" evidence="2">
    <location>
        <begin position="131"/>
        <end position="141"/>
    </location>
</feature>
<feature type="compositionally biased region" description="Polar residues" evidence="2">
    <location>
        <begin position="429"/>
        <end position="438"/>
    </location>
</feature>